<sequence length="277" mass="30654">MLIYPPIDPVALQIGPLAIHWYGLSYLAAFGLFMLLGCRRLRHPPFAGRTGPGAWSRKDVEDILFLGVAGVVLGGRLGYCLFYKPDYYLGHPLEVFALWQGGMAFHGGLLGVIVAMLWFAHSRQRPLLQVADFVAPCVPTGLAAGRVGNFINGELWGRFASPDLPWGMVFAHSGSMQPRHPSQVYQFLLEGLLLFVLLWLYARRERRQGQVAAAFLVGYGVLRFIAEQFREPDAFLGILALGMSMGQWLCLPMIAGGVLLWCRAARRRPAVARGSRA</sequence>
<reference key="1">
    <citation type="submission" date="2006-12" db="EMBL/GenBank/DDBJ databases">
        <title>Complete sequence of chromosome 1 of Verminephrobacter eiseniae EF01-2.</title>
        <authorList>
            <person name="Copeland A."/>
            <person name="Lucas S."/>
            <person name="Lapidus A."/>
            <person name="Barry K."/>
            <person name="Detter J.C."/>
            <person name="Glavina del Rio T."/>
            <person name="Dalin E."/>
            <person name="Tice H."/>
            <person name="Pitluck S."/>
            <person name="Chertkov O."/>
            <person name="Brettin T."/>
            <person name="Bruce D."/>
            <person name="Han C."/>
            <person name="Tapia R."/>
            <person name="Gilna P."/>
            <person name="Schmutz J."/>
            <person name="Larimer F."/>
            <person name="Land M."/>
            <person name="Hauser L."/>
            <person name="Kyrpides N."/>
            <person name="Kim E."/>
            <person name="Stahl D."/>
            <person name="Richardson P."/>
        </authorList>
    </citation>
    <scope>NUCLEOTIDE SEQUENCE [LARGE SCALE GENOMIC DNA]</scope>
    <source>
        <strain>EF01-2</strain>
    </source>
</reference>
<gene>
    <name evidence="1" type="primary">lgt</name>
    <name type="ordered locus">Veis_3224</name>
</gene>
<feature type="chain" id="PRO_1000053522" description="Phosphatidylglycerol--prolipoprotein diacylglyceryl transferase">
    <location>
        <begin position="1"/>
        <end position="277"/>
    </location>
</feature>
<feature type="transmembrane region" description="Helical" evidence="1">
    <location>
        <begin position="17"/>
        <end position="37"/>
    </location>
</feature>
<feature type="transmembrane region" description="Helical" evidence="1">
    <location>
        <begin position="63"/>
        <end position="83"/>
    </location>
</feature>
<feature type="transmembrane region" description="Helical" evidence="1">
    <location>
        <begin position="101"/>
        <end position="121"/>
    </location>
</feature>
<feature type="transmembrane region" description="Helical" evidence="1">
    <location>
        <begin position="182"/>
        <end position="202"/>
    </location>
</feature>
<feature type="transmembrane region" description="Helical" evidence="1">
    <location>
        <begin position="209"/>
        <end position="229"/>
    </location>
</feature>
<feature type="transmembrane region" description="Helical" evidence="1">
    <location>
        <begin position="234"/>
        <end position="254"/>
    </location>
</feature>
<feature type="binding site" evidence="1">
    <location>
        <position position="146"/>
    </location>
    <ligand>
        <name>a 1,2-diacyl-sn-glycero-3-phospho-(1'-sn-glycerol)</name>
        <dbReference type="ChEBI" id="CHEBI:64716"/>
    </ligand>
</feature>
<protein>
    <recommendedName>
        <fullName evidence="1">Phosphatidylglycerol--prolipoprotein diacylglyceryl transferase</fullName>
        <ecNumber evidence="1">2.5.1.145</ecNumber>
    </recommendedName>
</protein>
<comment type="function">
    <text evidence="1">Catalyzes the transfer of the diacylglyceryl group from phosphatidylglycerol to the sulfhydryl group of the N-terminal cysteine of a prolipoprotein, the first step in the formation of mature lipoproteins.</text>
</comment>
<comment type="catalytic activity">
    <reaction evidence="1">
        <text>L-cysteinyl-[prolipoprotein] + a 1,2-diacyl-sn-glycero-3-phospho-(1'-sn-glycerol) = an S-1,2-diacyl-sn-glyceryl-L-cysteinyl-[prolipoprotein] + sn-glycerol 1-phosphate + H(+)</text>
        <dbReference type="Rhea" id="RHEA:56712"/>
        <dbReference type="Rhea" id="RHEA-COMP:14679"/>
        <dbReference type="Rhea" id="RHEA-COMP:14680"/>
        <dbReference type="ChEBI" id="CHEBI:15378"/>
        <dbReference type="ChEBI" id="CHEBI:29950"/>
        <dbReference type="ChEBI" id="CHEBI:57685"/>
        <dbReference type="ChEBI" id="CHEBI:64716"/>
        <dbReference type="ChEBI" id="CHEBI:140658"/>
        <dbReference type="EC" id="2.5.1.145"/>
    </reaction>
</comment>
<comment type="pathway">
    <text evidence="1">Protein modification; lipoprotein biosynthesis (diacylglyceryl transfer).</text>
</comment>
<comment type="subcellular location">
    <subcellularLocation>
        <location evidence="1">Cell inner membrane</location>
        <topology evidence="1">Multi-pass membrane protein</topology>
    </subcellularLocation>
</comment>
<comment type="similarity">
    <text evidence="1">Belongs to the Lgt family.</text>
</comment>
<organism>
    <name type="scientific">Verminephrobacter eiseniae (strain EF01-2)</name>
    <dbReference type="NCBI Taxonomy" id="391735"/>
    <lineage>
        <taxon>Bacteria</taxon>
        <taxon>Pseudomonadati</taxon>
        <taxon>Pseudomonadota</taxon>
        <taxon>Betaproteobacteria</taxon>
        <taxon>Burkholderiales</taxon>
        <taxon>Comamonadaceae</taxon>
        <taxon>Verminephrobacter</taxon>
    </lineage>
</organism>
<name>LGT_VEREI</name>
<keyword id="KW-0997">Cell inner membrane</keyword>
<keyword id="KW-1003">Cell membrane</keyword>
<keyword id="KW-0472">Membrane</keyword>
<keyword id="KW-1185">Reference proteome</keyword>
<keyword id="KW-0808">Transferase</keyword>
<keyword id="KW-0812">Transmembrane</keyword>
<keyword id="KW-1133">Transmembrane helix</keyword>
<accession>A1WMU7</accession>
<proteinExistence type="inferred from homology"/>
<evidence type="ECO:0000255" key="1">
    <source>
        <dbReference type="HAMAP-Rule" id="MF_01147"/>
    </source>
</evidence>
<dbReference type="EC" id="2.5.1.145" evidence="1"/>
<dbReference type="EMBL" id="CP000542">
    <property type="protein sequence ID" value="ABM58954.1"/>
    <property type="molecule type" value="Genomic_DNA"/>
</dbReference>
<dbReference type="RefSeq" id="WP_011810946.1">
    <property type="nucleotide sequence ID" value="NC_008786.1"/>
</dbReference>
<dbReference type="SMR" id="A1WMU7"/>
<dbReference type="STRING" id="391735.Veis_3224"/>
<dbReference type="GeneID" id="76461675"/>
<dbReference type="KEGG" id="vei:Veis_3224"/>
<dbReference type="eggNOG" id="COG0682">
    <property type="taxonomic scope" value="Bacteria"/>
</dbReference>
<dbReference type="HOGENOM" id="CLU_013386_1_0_4"/>
<dbReference type="OrthoDB" id="871140at2"/>
<dbReference type="UniPathway" id="UPA00664"/>
<dbReference type="Proteomes" id="UP000000374">
    <property type="component" value="Chromosome"/>
</dbReference>
<dbReference type="GO" id="GO:0005886">
    <property type="term" value="C:plasma membrane"/>
    <property type="evidence" value="ECO:0007669"/>
    <property type="project" value="UniProtKB-SubCell"/>
</dbReference>
<dbReference type="GO" id="GO:0008961">
    <property type="term" value="F:phosphatidylglycerol-prolipoprotein diacylglyceryl transferase activity"/>
    <property type="evidence" value="ECO:0007669"/>
    <property type="project" value="UniProtKB-UniRule"/>
</dbReference>
<dbReference type="GO" id="GO:0042158">
    <property type="term" value="P:lipoprotein biosynthetic process"/>
    <property type="evidence" value="ECO:0007669"/>
    <property type="project" value="UniProtKB-UniRule"/>
</dbReference>
<dbReference type="HAMAP" id="MF_01147">
    <property type="entry name" value="Lgt"/>
    <property type="match status" value="1"/>
</dbReference>
<dbReference type="InterPro" id="IPR001640">
    <property type="entry name" value="Lgt"/>
</dbReference>
<dbReference type="NCBIfam" id="TIGR00544">
    <property type="entry name" value="lgt"/>
    <property type="match status" value="1"/>
</dbReference>
<dbReference type="PANTHER" id="PTHR30589:SF0">
    <property type="entry name" value="PHOSPHATIDYLGLYCEROL--PROLIPOPROTEIN DIACYLGLYCERYL TRANSFERASE"/>
    <property type="match status" value="1"/>
</dbReference>
<dbReference type="PANTHER" id="PTHR30589">
    <property type="entry name" value="PROLIPOPROTEIN DIACYLGLYCERYL TRANSFERASE"/>
    <property type="match status" value="1"/>
</dbReference>
<dbReference type="Pfam" id="PF01790">
    <property type="entry name" value="LGT"/>
    <property type="match status" value="1"/>
</dbReference>
<dbReference type="PROSITE" id="PS01311">
    <property type="entry name" value="LGT"/>
    <property type="match status" value="1"/>
</dbReference>